<name>CF263_BOVIN</name>
<protein>
    <recommendedName>
        <fullName>Cilia- and flagella-associated protein 263</fullName>
    </recommendedName>
</protein>
<keyword id="KW-0966">Cell projection</keyword>
<keyword id="KW-0970">Cilium biogenesis/degradation</keyword>
<keyword id="KW-0175">Coiled coil</keyword>
<keyword id="KW-0963">Cytoplasm</keyword>
<keyword id="KW-0206">Cytoskeleton</keyword>
<keyword id="KW-1185">Reference proteome</keyword>
<accession>Q3SZX9</accession>
<gene>
    <name type="primary">CFAP263</name>
    <name type="synonym">CCDC113</name>
</gene>
<comment type="function">
    <text evidence="1 2">Component of centriolar satellites contributing to primary cilium formation (By similarity). In complex with CFAP263, acts as a regulator of ciliary beating that connects radial spoke 3 (RS3) to the inner dynein arm (IDA) and the nexin-dynein regulatory complex (N-DRC). The complex is positioned parallel to N-DRC and forms a connection between the arch at the base of RS3, the IDA tail and N-DRC (By similarity).</text>
</comment>
<comment type="subunit">
    <text evidence="1 2">Forms a complex with CFAP184; the interaction is required for functional activity in cilia (By similarity). Interacts with HAP1 and PCM1 (By similarity).</text>
</comment>
<comment type="subcellular location">
    <subcellularLocation>
        <location evidence="5">Cytoplasm</location>
        <location evidence="5">Cytoskeleton</location>
        <location evidence="5">Microtubule organizing center</location>
        <location evidence="5">Centrosome</location>
        <location evidence="5">Centriolar satellite</location>
    </subcellularLocation>
    <subcellularLocation>
        <location evidence="1">Cell projection</location>
        <location evidence="1">Cilium</location>
    </subcellularLocation>
    <text evidence="1 2">Colocalized with HAP1 at centriolar satellites. Centriolar satellite localization requires PCM1 (By similarity). Localizes at cilium but not at the ciliary tips (By similarity).</text>
</comment>
<comment type="similarity">
    <text evidence="6">Belongs to the CFAP263 family.</text>
</comment>
<sequence>MTDDDSETSASETQAQEESDLPVFQLCGLVEELSYGNSALKTETEMFEKYYNKLELKDQRPPRLSEIKITGAEIAQLRSRRKSKSRMGMERVMGLSVDQKLELVQKELEDTKDEIRHMRANAERDLQHHEAIIEEAEIRWTEVQKEVHDFEKDILKTISKKKGSILATQKVMKYIEDMNRRRDNMKDKLRLKNVSLKVQRKKLLLQLRQKEEVGEALHDVDFQQLKIENAQFLETIEARNQELIQMKLASGNTLQILNAYKRSSLLKTSRVVILQSKLHHAMQMSLNLTKEFLLRKELLEKIEKETLQAEEDRAKALALNKQLRKQLSEFRAPQVMIYIWEKIRNGDLEKTIRMWERKVEIAEMSLKGYRKAWNKMKTTNEQLQAISGPGK</sequence>
<organism>
    <name type="scientific">Bos taurus</name>
    <name type="common">Bovine</name>
    <dbReference type="NCBI Taxonomy" id="9913"/>
    <lineage>
        <taxon>Eukaryota</taxon>
        <taxon>Metazoa</taxon>
        <taxon>Chordata</taxon>
        <taxon>Craniata</taxon>
        <taxon>Vertebrata</taxon>
        <taxon>Euteleostomi</taxon>
        <taxon>Mammalia</taxon>
        <taxon>Eutheria</taxon>
        <taxon>Laurasiatheria</taxon>
        <taxon>Artiodactyla</taxon>
        <taxon>Ruminantia</taxon>
        <taxon>Pecora</taxon>
        <taxon>Bovidae</taxon>
        <taxon>Bovinae</taxon>
        <taxon>Bos</taxon>
    </lineage>
</organism>
<proteinExistence type="evidence at protein level"/>
<dbReference type="EMBL" id="BC102661">
    <property type="protein sequence ID" value="AAI02662.1"/>
    <property type="molecule type" value="mRNA"/>
</dbReference>
<dbReference type="RefSeq" id="NP_001069378.1">
    <property type="nucleotide sequence ID" value="NM_001075910.2"/>
</dbReference>
<dbReference type="SMR" id="Q3SZX9"/>
<dbReference type="FunCoup" id="Q3SZX9">
    <property type="interactions" value="56"/>
</dbReference>
<dbReference type="STRING" id="9913.ENSBTAP00000018801"/>
<dbReference type="PaxDb" id="9913-ENSBTAP00000018801"/>
<dbReference type="Ensembl" id="ENSBTAT00000018801.5">
    <property type="protein sequence ID" value="ENSBTAP00000018801.5"/>
    <property type="gene ID" value="ENSBTAG00000014144.5"/>
</dbReference>
<dbReference type="GeneID" id="528348"/>
<dbReference type="KEGG" id="bta:528348"/>
<dbReference type="CTD" id="244608"/>
<dbReference type="VGNC" id="VGNC:26835">
    <property type="gene designation" value="CFAP263"/>
</dbReference>
<dbReference type="eggNOG" id="ENOG502QU7J">
    <property type="taxonomic scope" value="Eukaryota"/>
</dbReference>
<dbReference type="GeneTree" id="ENSGT00940000154521"/>
<dbReference type="HOGENOM" id="CLU_046867_1_0_1"/>
<dbReference type="InParanoid" id="Q3SZX9"/>
<dbReference type="OrthoDB" id="10259713at2759"/>
<dbReference type="TreeFam" id="TF328830"/>
<dbReference type="Proteomes" id="UP000009136">
    <property type="component" value="Chromosome 18"/>
</dbReference>
<dbReference type="GO" id="GO:0005930">
    <property type="term" value="C:axoneme"/>
    <property type="evidence" value="ECO:0000318"/>
    <property type="project" value="GO_Central"/>
</dbReference>
<dbReference type="GO" id="GO:0034451">
    <property type="term" value="C:centriolar satellite"/>
    <property type="evidence" value="ECO:0000250"/>
    <property type="project" value="UniProtKB"/>
</dbReference>
<dbReference type="GO" id="GO:0036064">
    <property type="term" value="C:ciliary basal body"/>
    <property type="evidence" value="ECO:0000318"/>
    <property type="project" value="GO_Central"/>
</dbReference>
<dbReference type="GO" id="GO:0032991">
    <property type="term" value="C:protein-containing complex"/>
    <property type="evidence" value="ECO:0000250"/>
    <property type="project" value="UniProtKB"/>
</dbReference>
<dbReference type="GO" id="GO:0060271">
    <property type="term" value="P:cilium assembly"/>
    <property type="evidence" value="ECO:0000250"/>
    <property type="project" value="UniProtKB"/>
</dbReference>
<dbReference type="InterPro" id="IPR051885">
    <property type="entry name" value="CC_domain-Cilium_Assoc"/>
</dbReference>
<dbReference type="InterPro" id="IPR025254">
    <property type="entry name" value="CCDC113/CCDC96_CC"/>
</dbReference>
<dbReference type="PANTHER" id="PTHR15654:SF2">
    <property type="entry name" value="COILED-COIL DOMAIN-CONTAINING PROTEIN 113"/>
    <property type="match status" value="1"/>
</dbReference>
<dbReference type="PANTHER" id="PTHR15654">
    <property type="entry name" value="COILED-COIL DOMAIN-CONTAINING PROTEIN 113-RELATED"/>
    <property type="match status" value="1"/>
</dbReference>
<dbReference type="Pfam" id="PF13870">
    <property type="entry name" value="CCDC113_CCDC96_CC"/>
    <property type="match status" value="1"/>
</dbReference>
<reference key="1">
    <citation type="submission" date="2005-08" db="EMBL/GenBank/DDBJ databases">
        <authorList>
            <consortium name="NIH - Mammalian Gene Collection (MGC) project"/>
        </authorList>
    </citation>
    <scope>NUCLEOTIDE SEQUENCE [LARGE SCALE MRNA]</scope>
    <source>
        <strain>Crossbred X Angus</strain>
        <tissue>Liver</tissue>
    </source>
</reference>
<reference key="2">
    <citation type="journal article" date="2014" name="J. Cell Sci.">
        <title>Proteomic analysis of mammalian sperm cells identifies new components of the centrosome.</title>
        <authorList>
            <person name="Firat-Karalar E.N."/>
            <person name="Sante J."/>
            <person name="Elliott S."/>
            <person name="Stearns T."/>
        </authorList>
    </citation>
    <scope>IDENTIFICATION BY MASS SPECTROMETRY</scope>
    <scope>SUBCELLULAR LOCATION</scope>
</reference>
<feature type="chain" id="PRO_0000279398" description="Cilia- and flagella-associated protein 263">
    <location>
        <begin position="1"/>
        <end position="391"/>
    </location>
</feature>
<feature type="region of interest" description="Disordered" evidence="4">
    <location>
        <begin position="1"/>
        <end position="21"/>
    </location>
</feature>
<feature type="coiled-coil region" evidence="3">
    <location>
        <begin position="95"/>
        <end position="243"/>
    </location>
</feature>
<feature type="coiled-coil region" evidence="3">
    <location>
        <begin position="294"/>
        <end position="369"/>
    </location>
</feature>
<evidence type="ECO:0000250" key="1">
    <source>
        <dbReference type="UniProtKB" id="Q22KK0"/>
    </source>
</evidence>
<evidence type="ECO:0000250" key="2">
    <source>
        <dbReference type="UniProtKB" id="Q9H0I3"/>
    </source>
</evidence>
<evidence type="ECO:0000255" key="3"/>
<evidence type="ECO:0000256" key="4">
    <source>
        <dbReference type="SAM" id="MobiDB-lite"/>
    </source>
</evidence>
<evidence type="ECO:0000269" key="5">
    <source>
    </source>
</evidence>
<evidence type="ECO:0000305" key="6"/>